<sequence length="93" mass="10564">MIVEVVVMTNIEERINQIIQVLREQVVQDTAVPRNIRRAAEQAIEALQNKEKEPAVRAADAIAILEEISEDPNMPLHTRTIIWEVLGALEQIK</sequence>
<gene>
    <name type="ordered locus">PF0239</name>
</gene>
<reference key="1">
    <citation type="journal article" date="1999" name="Genetics">
        <title>Divergence of the hyperthermophilic archaea Pyrococcus furiosus and P. horikoshii inferred from complete genomic sequences.</title>
        <authorList>
            <person name="Maeder D.L."/>
            <person name="Weiss R.B."/>
            <person name="Dunn D.M."/>
            <person name="Cherry J.L."/>
            <person name="Gonzalez J.M."/>
            <person name="DiRuggiero J."/>
            <person name="Robb F.T."/>
        </authorList>
    </citation>
    <scope>NUCLEOTIDE SEQUENCE [LARGE SCALE GENOMIC DNA]</scope>
    <source>
        <strain>ATCC 43587 / DSM 3638 / JCM 8422 / Vc1</strain>
    </source>
</reference>
<comment type="similarity">
    <text evidence="1">Belongs to the UPF0147 family.</text>
</comment>
<comment type="sequence caution" evidence="1">
    <conflict type="erroneous initiation">
        <sequence resource="EMBL-CDS" id="AAL80363"/>
    </conflict>
</comment>
<proteinExistence type="inferred from homology"/>
<evidence type="ECO:0000305" key="1"/>
<organism>
    <name type="scientific">Pyrococcus furiosus (strain ATCC 43587 / DSM 3638 / JCM 8422 / Vc1)</name>
    <dbReference type="NCBI Taxonomy" id="186497"/>
    <lineage>
        <taxon>Archaea</taxon>
        <taxon>Methanobacteriati</taxon>
        <taxon>Methanobacteriota</taxon>
        <taxon>Thermococci</taxon>
        <taxon>Thermococcales</taxon>
        <taxon>Thermococcaceae</taxon>
        <taxon>Pyrococcus</taxon>
    </lineage>
</organism>
<protein>
    <recommendedName>
        <fullName>UPF0147 protein PF0239</fullName>
    </recommendedName>
</protein>
<keyword id="KW-1185">Reference proteome</keyword>
<dbReference type="EMBL" id="AE009950">
    <property type="protein sequence ID" value="AAL80363.1"/>
    <property type="status" value="ALT_INIT"/>
    <property type="molecule type" value="Genomic_DNA"/>
</dbReference>
<dbReference type="SMR" id="Q8U455"/>
<dbReference type="STRING" id="186497.PF0239"/>
<dbReference type="PaxDb" id="186497-PF0239"/>
<dbReference type="KEGG" id="pfu:PF0239"/>
<dbReference type="PATRIC" id="fig|186497.12.peg.249"/>
<dbReference type="eggNOG" id="arCOG04308">
    <property type="taxonomic scope" value="Archaea"/>
</dbReference>
<dbReference type="HOGENOM" id="CLU_165882_1_0_2"/>
<dbReference type="PhylomeDB" id="Q8U455"/>
<dbReference type="Proteomes" id="UP000001013">
    <property type="component" value="Chromosome"/>
</dbReference>
<dbReference type="Gene3D" id="1.20.1440.50">
    <property type="entry name" value="Ta0600-like"/>
    <property type="match status" value="1"/>
</dbReference>
<dbReference type="HAMAP" id="MF_00342">
    <property type="entry name" value="UPF0147"/>
    <property type="match status" value="1"/>
</dbReference>
<dbReference type="InterPro" id="IPR023130">
    <property type="entry name" value="Ta0600-like_sf"/>
</dbReference>
<dbReference type="InterPro" id="IPR005354">
    <property type="entry name" value="UPF0147"/>
</dbReference>
<dbReference type="NCBIfam" id="NF003319">
    <property type="entry name" value="PRK04330.1"/>
    <property type="match status" value="1"/>
</dbReference>
<dbReference type="Pfam" id="PF03685">
    <property type="entry name" value="UPF0147"/>
    <property type="match status" value="1"/>
</dbReference>
<dbReference type="SUPFAM" id="SSF158436">
    <property type="entry name" value="Ta0600-like"/>
    <property type="match status" value="1"/>
</dbReference>
<feature type="chain" id="PRO_0000150913" description="UPF0147 protein PF0239">
    <location>
        <begin position="1"/>
        <end position="93"/>
    </location>
</feature>
<accession>Q8U455</accession>
<name>Y239_PYRFU</name>